<keyword id="KW-0072">Autophagy</keyword>
<keyword id="KW-1003">Cell membrane</keyword>
<keyword id="KW-0966">Cell projection</keyword>
<keyword id="KW-0970">Cilium biogenesis/degradation</keyword>
<keyword id="KW-0963">Cytoplasm</keyword>
<keyword id="KW-0968">Cytoplasmic vesicle</keyword>
<keyword id="KW-0206">Cytoskeleton</keyword>
<keyword id="KW-0967">Endosome</keyword>
<keyword id="KW-0333">Golgi apparatus</keyword>
<keyword id="KW-0342">GTP-binding</keyword>
<keyword id="KW-0378">Hydrolase</keyword>
<keyword id="KW-0449">Lipoprotein</keyword>
<keyword id="KW-0458">Lysosome</keyword>
<keyword id="KW-0460">Magnesium</keyword>
<keyword id="KW-0472">Membrane</keyword>
<keyword id="KW-0479">Metal-binding</keyword>
<keyword id="KW-0488">Methylation</keyword>
<keyword id="KW-0547">Nucleotide-binding</keyword>
<keyword id="KW-0597">Phosphoprotein</keyword>
<keyword id="KW-0636">Prenylation</keyword>
<keyword id="KW-0653">Protein transport</keyword>
<keyword id="KW-1185">Reference proteome</keyword>
<keyword id="KW-0813">Transport</keyword>
<organism>
    <name type="scientific">Pongo abelii</name>
    <name type="common">Sumatran orangutan</name>
    <name type="synonym">Pongo pygmaeus abelii</name>
    <dbReference type="NCBI Taxonomy" id="9601"/>
    <lineage>
        <taxon>Eukaryota</taxon>
        <taxon>Metazoa</taxon>
        <taxon>Chordata</taxon>
        <taxon>Craniata</taxon>
        <taxon>Vertebrata</taxon>
        <taxon>Euteleostomi</taxon>
        <taxon>Mammalia</taxon>
        <taxon>Eutheria</taxon>
        <taxon>Euarchontoglires</taxon>
        <taxon>Primates</taxon>
        <taxon>Haplorrhini</taxon>
        <taxon>Catarrhini</taxon>
        <taxon>Hominidae</taxon>
        <taxon>Pongo</taxon>
    </lineage>
</organism>
<dbReference type="EC" id="3.6.5.2" evidence="4"/>
<dbReference type="EMBL" id="CR861352">
    <property type="protein sequence ID" value="CAH93413.1"/>
    <property type="molecule type" value="mRNA"/>
</dbReference>
<dbReference type="RefSeq" id="NP_001127003.1">
    <property type="nucleotide sequence ID" value="NM_001133531.1"/>
</dbReference>
<dbReference type="SMR" id="Q5R4A3"/>
<dbReference type="STRING" id="9601.ENSPPYP00000010852"/>
<dbReference type="GeneID" id="100174026"/>
<dbReference type="KEGG" id="pon:100174026"/>
<dbReference type="CTD" id="4218"/>
<dbReference type="eggNOG" id="KOG0078">
    <property type="taxonomic scope" value="Eukaryota"/>
</dbReference>
<dbReference type="InParanoid" id="Q5R4A3"/>
<dbReference type="OrthoDB" id="9989112at2759"/>
<dbReference type="Proteomes" id="UP000001595">
    <property type="component" value="Unplaced"/>
</dbReference>
<dbReference type="GO" id="GO:0005814">
    <property type="term" value="C:centriole"/>
    <property type="evidence" value="ECO:0007669"/>
    <property type="project" value="UniProtKB-SubCell"/>
</dbReference>
<dbReference type="GO" id="GO:0005813">
    <property type="term" value="C:centrosome"/>
    <property type="evidence" value="ECO:0000250"/>
    <property type="project" value="UniProtKB"/>
</dbReference>
<dbReference type="GO" id="GO:0036064">
    <property type="term" value="C:ciliary basal body"/>
    <property type="evidence" value="ECO:0000250"/>
    <property type="project" value="UniProtKB"/>
</dbReference>
<dbReference type="GO" id="GO:0005929">
    <property type="term" value="C:cilium"/>
    <property type="evidence" value="ECO:0000250"/>
    <property type="project" value="UniProtKB"/>
</dbReference>
<dbReference type="GO" id="GO:0010008">
    <property type="term" value="C:endosome membrane"/>
    <property type="evidence" value="ECO:0000250"/>
    <property type="project" value="UniProtKB"/>
</dbReference>
<dbReference type="GO" id="GO:0005794">
    <property type="term" value="C:Golgi apparatus"/>
    <property type="evidence" value="ECO:0007669"/>
    <property type="project" value="UniProtKB-SubCell"/>
</dbReference>
<dbReference type="GO" id="GO:0005764">
    <property type="term" value="C:lysosome"/>
    <property type="evidence" value="ECO:0007669"/>
    <property type="project" value="UniProtKB-SubCell"/>
</dbReference>
<dbReference type="GO" id="GO:0030496">
    <property type="term" value="C:midbody"/>
    <property type="evidence" value="ECO:0000250"/>
    <property type="project" value="UniProtKB"/>
</dbReference>
<dbReference type="GO" id="GO:0045335">
    <property type="term" value="C:phagocytic vesicle"/>
    <property type="evidence" value="ECO:0000250"/>
    <property type="project" value="UniProtKB"/>
</dbReference>
<dbReference type="GO" id="GO:0030670">
    <property type="term" value="C:phagocytic vesicle membrane"/>
    <property type="evidence" value="ECO:0007669"/>
    <property type="project" value="UniProtKB-SubCell"/>
</dbReference>
<dbReference type="GO" id="GO:0005886">
    <property type="term" value="C:plasma membrane"/>
    <property type="evidence" value="ECO:0007669"/>
    <property type="project" value="UniProtKB-SubCell"/>
</dbReference>
<dbReference type="GO" id="GO:0055038">
    <property type="term" value="C:recycling endosome membrane"/>
    <property type="evidence" value="ECO:0000250"/>
    <property type="project" value="UniProtKB"/>
</dbReference>
<dbReference type="GO" id="GO:0019003">
    <property type="term" value="F:GDP binding"/>
    <property type="evidence" value="ECO:0000250"/>
    <property type="project" value="UniProtKB"/>
</dbReference>
<dbReference type="GO" id="GO:0005525">
    <property type="term" value="F:GTP binding"/>
    <property type="evidence" value="ECO:0000250"/>
    <property type="project" value="UniProtKB"/>
</dbReference>
<dbReference type="GO" id="GO:0003924">
    <property type="term" value="F:GTPase activity"/>
    <property type="evidence" value="ECO:0007669"/>
    <property type="project" value="InterPro"/>
</dbReference>
<dbReference type="GO" id="GO:0031267">
    <property type="term" value="F:small GTPase binding"/>
    <property type="evidence" value="ECO:0000250"/>
    <property type="project" value="UniProtKB"/>
</dbReference>
<dbReference type="GO" id="GO:0006914">
    <property type="term" value="P:autophagy"/>
    <property type="evidence" value="ECO:0007669"/>
    <property type="project" value="UniProtKB-KW"/>
</dbReference>
<dbReference type="GO" id="GO:0007409">
    <property type="term" value="P:axonogenesis"/>
    <property type="evidence" value="ECO:0000250"/>
    <property type="project" value="UniProtKB"/>
</dbReference>
<dbReference type="GO" id="GO:0032869">
    <property type="term" value="P:cellular response to insulin stimulus"/>
    <property type="evidence" value="ECO:0000250"/>
    <property type="project" value="UniProtKB"/>
</dbReference>
<dbReference type="GO" id="GO:0060271">
    <property type="term" value="P:cilium assembly"/>
    <property type="evidence" value="ECO:0000250"/>
    <property type="project" value="UniProtKB"/>
</dbReference>
<dbReference type="GO" id="GO:0007030">
    <property type="term" value="P:Golgi organization"/>
    <property type="evidence" value="ECO:0000250"/>
    <property type="project" value="UniProtKB"/>
</dbReference>
<dbReference type="GO" id="GO:0061512">
    <property type="term" value="P:protein localization to cilium"/>
    <property type="evidence" value="ECO:0000250"/>
    <property type="project" value="UniProtKB"/>
</dbReference>
<dbReference type="GO" id="GO:0072659">
    <property type="term" value="P:protein localization to plasma membrane"/>
    <property type="evidence" value="ECO:0000250"/>
    <property type="project" value="UniProtKB"/>
</dbReference>
<dbReference type="GO" id="GO:0015031">
    <property type="term" value="P:protein transport"/>
    <property type="evidence" value="ECO:0007669"/>
    <property type="project" value="UniProtKB-KW"/>
</dbReference>
<dbReference type="GO" id="GO:0010506">
    <property type="term" value="P:regulation of autophagy"/>
    <property type="evidence" value="ECO:0000250"/>
    <property type="project" value="UniProtKB"/>
</dbReference>
<dbReference type="CDD" id="cd01867">
    <property type="entry name" value="Rab8_Rab10_Rab13_like"/>
    <property type="match status" value="1"/>
</dbReference>
<dbReference type="FunFam" id="3.40.50.300:FF:000202">
    <property type="entry name" value="ras-related protein Rab-8A"/>
    <property type="match status" value="1"/>
</dbReference>
<dbReference type="Gene3D" id="3.40.50.300">
    <property type="entry name" value="P-loop containing nucleotide triphosphate hydrolases"/>
    <property type="match status" value="1"/>
</dbReference>
<dbReference type="InterPro" id="IPR027417">
    <property type="entry name" value="P-loop_NTPase"/>
</dbReference>
<dbReference type="InterPro" id="IPR005225">
    <property type="entry name" value="Small_GTP-bd"/>
</dbReference>
<dbReference type="InterPro" id="IPR001806">
    <property type="entry name" value="Small_GTPase"/>
</dbReference>
<dbReference type="InterPro" id="IPR050305">
    <property type="entry name" value="Small_GTPase_Rab"/>
</dbReference>
<dbReference type="NCBIfam" id="TIGR00231">
    <property type="entry name" value="small_GTP"/>
    <property type="match status" value="1"/>
</dbReference>
<dbReference type="PANTHER" id="PTHR47980">
    <property type="entry name" value="LD44762P"/>
    <property type="match status" value="1"/>
</dbReference>
<dbReference type="Pfam" id="PF00071">
    <property type="entry name" value="Ras"/>
    <property type="match status" value="1"/>
</dbReference>
<dbReference type="PRINTS" id="PR00449">
    <property type="entry name" value="RASTRNSFRMNG"/>
</dbReference>
<dbReference type="SMART" id="SM00177">
    <property type="entry name" value="ARF"/>
    <property type="match status" value="1"/>
</dbReference>
<dbReference type="SMART" id="SM00175">
    <property type="entry name" value="RAB"/>
    <property type="match status" value="1"/>
</dbReference>
<dbReference type="SMART" id="SM00176">
    <property type="entry name" value="RAN"/>
    <property type="match status" value="1"/>
</dbReference>
<dbReference type="SMART" id="SM00173">
    <property type="entry name" value="RAS"/>
    <property type="match status" value="1"/>
</dbReference>
<dbReference type="SMART" id="SM00174">
    <property type="entry name" value="RHO"/>
    <property type="match status" value="1"/>
</dbReference>
<dbReference type="SUPFAM" id="SSF52540">
    <property type="entry name" value="P-loop containing nucleoside triphosphate hydrolases"/>
    <property type="match status" value="1"/>
</dbReference>
<dbReference type="PROSITE" id="PS51419">
    <property type="entry name" value="RAB"/>
    <property type="match status" value="1"/>
</dbReference>
<comment type="function">
    <text evidence="2 3 4">The small GTPases Rab are key regulators of intracellular membrane trafficking, from the formation of transport vesicles to their fusion with membranes. Rabs cycle between an inactive GDP-bound form and an active GTP-bound form that is able to recruit to membranes different sets of downstream effectors directly responsible for vesicle formation, movement, tethering and fusion. RAB8A is involved in polarized vesicular trafficking and neurotransmitter release. Together with RAB11A, RAB3IP, the exocyst complex, PARD3, PRKCI, ANXA2, CDC42 and DNMBP promotes transcytosis of PODXL to the apical membrane initiation sites (AMIS), apical surface formation and lumenogenesis. Regulates the compacted morphology of the Golgi. Together with MYO5B and RAB11A participates in epithelial cell polarization. Also involved in membrane trafficking to the cilium and ciliogenesis (By similarity). Together with MICALL2, may also regulate adherens junction assembly (By similarity). May play a role in insulin-induced transport to the plasma membrane of the glucose transporter GLUT4 and therefore play a role in glucose homeostasis (By similarity). Involved in autophagy. Participates in the export of a subset of neosynthesized proteins through a Rab8-Rab10-Rab11-dependent endososomal export route. Targeted to and stabilized on stressed lysosomes through LRRK2 phosphorylation. Suppresses stress-induced lysosomal enlargement through EHBP1 and EHNP1L1 effector proteins (By similarity).</text>
</comment>
<comment type="catalytic activity">
    <reaction evidence="4">
        <text>GTP + H2O = GDP + phosphate + H(+)</text>
        <dbReference type="Rhea" id="RHEA:19669"/>
        <dbReference type="ChEBI" id="CHEBI:15377"/>
        <dbReference type="ChEBI" id="CHEBI:15378"/>
        <dbReference type="ChEBI" id="CHEBI:37565"/>
        <dbReference type="ChEBI" id="CHEBI:43474"/>
        <dbReference type="ChEBI" id="CHEBI:58189"/>
        <dbReference type="EC" id="3.6.5.2"/>
    </reaction>
    <physiologicalReaction direction="left-to-right" evidence="4">
        <dbReference type="Rhea" id="RHEA:19670"/>
    </physiologicalReaction>
</comment>
<comment type="cofactor">
    <cofactor evidence="4">
        <name>Mg(2+)</name>
        <dbReference type="ChEBI" id="CHEBI:18420"/>
    </cofactor>
</comment>
<comment type="activity regulation">
    <text evidence="2 4">Regulated by guanine nucleotide exchange factors (GEFs) such as RAB3IP/Rabin8 and RPGR which promote the exchange of bound GDP for free GTP, GTPase activating proteins (GAPs) which increase the GTP hydrolysis activity, and GDP dissociation inhibitors (GDIs) which inhibit the dissociation of the nucleotide from the GTPase (By similarity). Activated in response to insulin (By similarity).</text>
</comment>
<comment type="subunit">
    <text evidence="3 4">Interacts (GTP-bound form) with MICALL1; regulates RAB8A association with recycling endosomes (By similarity). Interacts with MICALL2; competes with RAB13 and is involved in E-cadherin endocytic recycling (By similarity). Interacts (GTP-bound form) with MICAL1, MICALCL, MICAL3, EHBP1 and EHBP1L1; at least in case of MICAL1, MICALCL, MICAL3 and EHBP1L1 two molecules of RAB8A can bind to one molecule of the effector protein; ternary complexes of RAB8A, RAB13 and either MICAL1 or EHBP1L1 are possible. Interacts with EHD1 (By similarity). Interacts with MAP4K2 and SYTL4 (By similarity). Interacts with SGSM1 and SGSM3 (By similarity). Interacts with RABIF, RIMS2, RPH3A and RPH3A (By similarity). Interacts with OPTN. Interacts with RAB3IP, RAB3IP functions as guanine exchange factor (GEF). Interacts with MYO5B. Interacts with CIMAP3. Interacts with BIRC6/bruce. Interacts with OCRL (By similarity). Interacts with AHI1 (By similarity). Interacts with DCDC1. Interacts with LRRK2; interaction facilitates phosphorylation of Thr-72. Interacts with RAB31P, GDI1, GDI2, CHM, CHML, RABGGTA, RABGGTB, TBC1D15 and INPP5B; these interactions are dependent on Thr-72 not being phosphorylated. Interacts with RILPL1 and RILPL2; these interactions are dependent on the phosphorylation of Thr-72 by LRRK2. Interacts with DZIP1; prevents inhibition by the GDP-dissociation inhibitor GDI2. Interacts (in GDP-bound form) with RAB3IP/Rabin8, RAB3IP functions as guanine exchange factor (GEF) towards RAB8A (By similarity). Interacts (in GDP-bound form) with RPGR, RPGR functions as GEF towards RAB8A (By similarity).</text>
</comment>
<comment type="subcellular location">
    <subcellularLocation>
        <location evidence="3">Cell membrane</location>
        <topology evidence="3">Lipid-anchor</topology>
        <orientation evidence="3">Cytoplasmic side</orientation>
    </subcellularLocation>
    <subcellularLocation>
        <location evidence="4">Golgi apparatus</location>
    </subcellularLocation>
    <subcellularLocation>
        <location evidence="4">Endosome membrane</location>
    </subcellularLocation>
    <subcellularLocation>
        <location evidence="4">Recycling endosome membrane</location>
    </subcellularLocation>
    <subcellularLocation>
        <location evidence="4">Cell projection</location>
        <location evidence="4">Cilium</location>
    </subcellularLocation>
    <subcellularLocation>
        <location evidence="4 7">Cytoplasmic vesicle</location>
        <location evidence="4 7">Phagosome membrane</location>
        <topology evidence="7">Lipid-anchor</topology>
        <orientation evidence="7">Cytoplasmic side</orientation>
    </subcellularLocation>
    <subcellularLocation>
        <location evidence="3">Cytoplasm</location>
        <location evidence="3">Cytoskeleton</location>
        <location evidence="3">Microtubule organizing center</location>
        <location evidence="3">Centrosome</location>
        <location evidence="3">Centriole</location>
    </subcellularLocation>
    <subcellularLocation>
        <location evidence="3">Cytoplasm</location>
        <location evidence="3">Cytoskeleton</location>
        <location evidence="3">Cilium basal body</location>
    </subcellularLocation>
    <subcellularLocation>
        <location evidence="4">Midbody</location>
    </subcellularLocation>
    <subcellularLocation>
        <location evidence="4">Cytoplasm</location>
    </subcellularLocation>
    <subcellularLocation>
        <location evidence="4">Lysosome</location>
    </subcellularLocation>
    <text evidence="4 5">Colocalizes with OPTN at the Golgi complex and in vesicular structures close to the plasma membrane. In the GDP-bound form, present in the perinuclear region. Shows a polarized distribution to distal regions of cell protrusions in the GTP-bound form. Colocalizes with PARD3, PRKCI, EXOC5, OCLN, PODXL and RAB11A in apical membrane initiation sites (AMIS) during the generation of apical surface and lumenogenesis. Localizes to tubular recycling endosome. Recruited to phagosomes containing S.aureus or Mycobacterium (By similarity). Non-phosphorylated RAB8A predominantly localizes to the cytoplasm whereas phosphorylated RAB8A localizes to the membrane (By similarity). Localizes to enlarged lysosomes through LRRK2 phosphorylation (By similarity). Colocalizes with RPGR at the primary cilia of epithelial cells (By similarity).</text>
</comment>
<comment type="domain">
    <text evidence="6">Switch 1, switch 2 and the interswitch regions are characteristic of Rab GTPases and mediate the interactions with Rab downstream effectors. The switch regions undergo conformational changes upon nucleotide binding which drives interaction with specific sets of effector proteins, with most effectors only binding to GTP-bound Rab.</text>
</comment>
<comment type="PTM">
    <text evidence="4">Phosphorylation of Thr-72 in the switch II region by LRRK2 prevents the association of RAB regulatory proteins, including CHM, CHML and RAB GDP dissociation inhibitors GDI1 and GDI2 (By similarity). Phosphorylation by LRRK2 is required for localization to stressed lysosomes (By similarity).</text>
</comment>
<comment type="similarity">
    <text evidence="9">Belongs to the small GTPase superfamily. Rab family.</text>
</comment>
<sequence length="207" mass="23721">MAKTYDYLFKLLLIGDSGVGKTCVLFRFSEDAFNSTFISTIGIDFKIRTIELDGKRIKLQIWDTAGQERFRTITTAYYRGAMGIMLVYDITNEKSFDNIRNWIRNIEEHASADVEKMILGNKRDVNDKRQVSKERGEKLALDYGIKFMETSAKANINVENAFFTLARDIKAKMDKKLEGNSPQGSNQGVKITPDQQKRSSFFRCVLL</sequence>
<name>RAB8A_PONAB</name>
<evidence type="ECO:0000250" key="1"/>
<evidence type="ECO:0000250" key="2">
    <source>
        <dbReference type="UniProtKB" id="P35280"/>
    </source>
</evidence>
<evidence type="ECO:0000250" key="3">
    <source>
        <dbReference type="UniProtKB" id="P55258"/>
    </source>
</evidence>
<evidence type="ECO:0000250" key="4">
    <source>
        <dbReference type="UniProtKB" id="P61006"/>
    </source>
</evidence>
<evidence type="ECO:0000250" key="5">
    <source>
        <dbReference type="UniProtKB" id="P61007"/>
    </source>
</evidence>
<evidence type="ECO:0000250" key="6">
    <source>
        <dbReference type="UniProtKB" id="P62820"/>
    </source>
</evidence>
<evidence type="ECO:0000250" key="7">
    <source>
        <dbReference type="UniProtKB" id="Q92930"/>
    </source>
</evidence>
<evidence type="ECO:0000255" key="8"/>
<evidence type="ECO:0000305" key="9"/>
<feature type="chain" id="PRO_0000260748" description="Ras-related protein Rab-8A">
    <location>
        <begin position="1"/>
        <end position="204"/>
    </location>
</feature>
<feature type="propeptide" id="PRO_0000370796" description="Removed in mature form" evidence="8">
    <location>
        <begin position="205"/>
        <end position="207"/>
    </location>
</feature>
<feature type="short sequence motif" description="Switch 1" evidence="6">
    <location>
        <begin position="31"/>
        <end position="45"/>
    </location>
</feature>
<feature type="short sequence motif" description="Switch 2" evidence="6">
    <location>
        <begin position="63"/>
        <end position="80"/>
    </location>
</feature>
<feature type="binding site" evidence="4">
    <location>
        <position position="17"/>
    </location>
    <ligand>
        <name>GTP</name>
        <dbReference type="ChEBI" id="CHEBI:37565"/>
    </ligand>
</feature>
<feature type="binding site" evidence="4">
    <location>
        <position position="18"/>
    </location>
    <ligand>
        <name>GTP</name>
        <dbReference type="ChEBI" id="CHEBI:37565"/>
    </ligand>
</feature>
<feature type="binding site" evidence="4">
    <location>
        <position position="19"/>
    </location>
    <ligand>
        <name>GTP</name>
        <dbReference type="ChEBI" id="CHEBI:37565"/>
    </ligand>
</feature>
<feature type="binding site" evidence="4">
    <location>
        <position position="20"/>
    </location>
    <ligand>
        <name>GTP</name>
        <dbReference type="ChEBI" id="CHEBI:37565"/>
    </ligand>
</feature>
<feature type="binding site" evidence="4">
    <location>
        <position position="21"/>
    </location>
    <ligand>
        <name>GTP</name>
        <dbReference type="ChEBI" id="CHEBI:37565"/>
    </ligand>
</feature>
<feature type="binding site" evidence="4">
    <location>
        <position position="22"/>
    </location>
    <ligand>
        <name>GTP</name>
        <dbReference type="ChEBI" id="CHEBI:37565"/>
    </ligand>
</feature>
<feature type="binding site" evidence="4">
    <location>
        <position position="22"/>
    </location>
    <ligand>
        <name>Mg(2+)</name>
        <dbReference type="ChEBI" id="CHEBI:18420"/>
    </ligand>
</feature>
<feature type="binding site" evidence="4">
    <location>
        <position position="23"/>
    </location>
    <ligand>
        <name>GTP</name>
        <dbReference type="ChEBI" id="CHEBI:37565"/>
    </ligand>
</feature>
<feature type="binding site" evidence="4">
    <location>
        <position position="35"/>
    </location>
    <ligand>
        <name>GTP</name>
        <dbReference type="ChEBI" id="CHEBI:37565"/>
    </ligand>
</feature>
<feature type="binding site" evidence="4">
    <location>
        <position position="39"/>
    </location>
    <ligand>
        <name>GTP</name>
        <dbReference type="ChEBI" id="CHEBI:37565"/>
    </ligand>
</feature>
<feature type="binding site" evidence="4">
    <location>
        <position position="40"/>
    </location>
    <ligand>
        <name>GTP</name>
        <dbReference type="ChEBI" id="CHEBI:37565"/>
    </ligand>
</feature>
<feature type="binding site" evidence="4">
    <location>
        <position position="40"/>
    </location>
    <ligand>
        <name>Mg(2+)</name>
        <dbReference type="ChEBI" id="CHEBI:18420"/>
    </ligand>
</feature>
<feature type="binding site" evidence="4">
    <location>
        <position position="63"/>
    </location>
    <ligand>
        <name>Mg(2+)</name>
        <dbReference type="ChEBI" id="CHEBI:18420"/>
    </ligand>
</feature>
<feature type="binding site" evidence="4">
    <location>
        <position position="66"/>
    </location>
    <ligand>
        <name>GTP</name>
        <dbReference type="ChEBI" id="CHEBI:37565"/>
    </ligand>
</feature>
<feature type="binding site" evidence="4">
    <location>
        <position position="121"/>
    </location>
    <ligand>
        <name>GTP</name>
        <dbReference type="ChEBI" id="CHEBI:37565"/>
    </ligand>
</feature>
<feature type="binding site" evidence="4">
    <location>
        <position position="122"/>
    </location>
    <ligand>
        <name>GTP</name>
        <dbReference type="ChEBI" id="CHEBI:37565"/>
    </ligand>
</feature>
<feature type="binding site" evidence="4">
    <location>
        <position position="124"/>
    </location>
    <ligand>
        <name>GTP</name>
        <dbReference type="ChEBI" id="CHEBI:37565"/>
    </ligand>
</feature>
<feature type="binding site" evidence="4">
    <location>
        <position position="152"/>
    </location>
    <ligand>
        <name>GTP</name>
        <dbReference type="ChEBI" id="CHEBI:37565"/>
    </ligand>
</feature>
<feature type="binding site" evidence="4">
    <location>
        <position position="153"/>
    </location>
    <ligand>
        <name>GTP</name>
        <dbReference type="ChEBI" id="CHEBI:37565"/>
    </ligand>
</feature>
<feature type="modified residue" description="Phosphothreonine" evidence="4">
    <location>
        <position position="72"/>
    </location>
</feature>
<feature type="modified residue" description="Phosphoserine" evidence="4">
    <location>
        <position position="181"/>
    </location>
</feature>
<feature type="modified residue" description="Phosphoserine" evidence="4">
    <location>
        <position position="185"/>
    </location>
</feature>
<feature type="modified residue" description="Cysteine methyl ester" evidence="8">
    <location>
        <position position="204"/>
    </location>
</feature>
<feature type="lipid moiety-binding region" description="S-geranylgeranyl cysteine" evidence="1">
    <location>
        <position position="204"/>
    </location>
</feature>
<protein>
    <recommendedName>
        <fullName>Ras-related protein Rab-8A</fullName>
        <ecNumber evidence="4">3.6.5.2</ecNumber>
    </recommendedName>
</protein>
<gene>
    <name type="primary">RAB8A</name>
</gene>
<proteinExistence type="evidence at transcript level"/>
<reference key="1">
    <citation type="submission" date="2004-11" db="EMBL/GenBank/DDBJ databases">
        <authorList>
            <consortium name="The German cDNA consortium"/>
        </authorList>
    </citation>
    <scope>NUCLEOTIDE SEQUENCE [LARGE SCALE MRNA]</scope>
    <source>
        <tissue>Brain cortex</tissue>
    </source>
</reference>
<accession>Q5R4A3</accession>